<name>RL10_FRATH</name>
<keyword id="KW-1185">Reference proteome</keyword>
<keyword id="KW-0687">Ribonucleoprotein</keyword>
<keyword id="KW-0689">Ribosomal protein</keyword>
<keyword id="KW-0694">RNA-binding</keyword>
<keyword id="KW-0699">rRNA-binding</keyword>
<gene>
    <name evidence="1" type="primary">rplJ</name>
    <name type="ordered locus">FTL_1746</name>
</gene>
<evidence type="ECO:0000255" key="1">
    <source>
        <dbReference type="HAMAP-Rule" id="MF_00362"/>
    </source>
</evidence>
<evidence type="ECO:0000305" key="2"/>
<reference key="1">
    <citation type="submission" date="2006-03" db="EMBL/GenBank/DDBJ databases">
        <title>Complete genome sequence of Francisella tularensis LVS (Live Vaccine Strain).</title>
        <authorList>
            <person name="Chain P."/>
            <person name="Larimer F."/>
            <person name="Land M."/>
            <person name="Stilwagen S."/>
            <person name="Larsson P."/>
            <person name="Bearden S."/>
            <person name="Chu M."/>
            <person name="Oyston P."/>
            <person name="Forsman M."/>
            <person name="Andersson S."/>
            <person name="Lindler L."/>
            <person name="Titball R."/>
            <person name="Garcia E."/>
        </authorList>
    </citation>
    <scope>NUCLEOTIDE SEQUENCE [LARGE SCALE GENOMIC DNA]</scope>
    <source>
        <strain>LVS</strain>
    </source>
</reference>
<accession>Q2A1M5</accession>
<dbReference type="EMBL" id="AM233362">
    <property type="protein sequence ID" value="CAJ80185.1"/>
    <property type="molecule type" value="Genomic_DNA"/>
</dbReference>
<dbReference type="RefSeq" id="WP_003017231.1">
    <property type="nucleotide sequence ID" value="NZ_CP009694.1"/>
</dbReference>
<dbReference type="SMR" id="Q2A1M5"/>
<dbReference type="KEGG" id="ftl:FTL_1746"/>
<dbReference type="Proteomes" id="UP000001944">
    <property type="component" value="Chromosome"/>
</dbReference>
<dbReference type="GO" id="GO:1990904">
    <property type="term" value="C:ribonucleoprotein complex"/>
    <property type="evidence" value="ECO:0007669"/>
    <property type="project" value="UniProtKB-KW"/>
</dbReference>
<dbReference type="GO" id="GO:0005840">
    <property type="term" value="C:ribosome"/>
    <property type="evidence" value="ECO:0007669"/>
    <property type="project" value="UniProtKB-KW"/>
</dbReference>
<dbReference type="GO" id="GO:0070180">
    <property type="term" value="F:large ribosomal subunit rRNA binding"/>
    <property type="evidence" value="ECO:0007669"/>
    <property type="project" value="UniProtKB-UniRule"/>
</dbReference>
<dbReference type="GO" id="GO:0006412">
    <property type="term" value="P:translation"/>
    <property type="evidence" value="ECO:0007669"/>
    <property type="project" value="UniProtKB-UniRule"/>
</dbReference>
<dbReference type="CDD" id="cd05797">
    <property type="entry name" value="Ribosomal_L10"/>
    <property type="match status" value="1"/>
</dbReference>
<dbReference type="Gene3D" id="3.30.70.1730">
    <property type="match status" value="1"/>
</dbReference>
<dbReference type="Gene3D" id="6.10.250.290">
    <property type="match status" value="1"/>
</dbReference>
<dbReference type="HAMAP" id="MF_00362">
    <property type="entry name" value="Ribosomal_uL10"/>
    <property type="match status" value="1"/>
</dbReference>
<dbReference type="InterPro" id="IPR001790">
    <property type="entry name" value="Ribosomal_uL10"/>
</dbReference>
<dbReference type="InterPro" id="IPR043141">
    <property type="entry name" value="Ribosomal_uL10-like_sf"/>
</dbReference>
<dbReference type="InterPro" id="IPR022973">
    <property type="entry name" value="Ribosomal_uL10_bac"/>
</dbReference>
<dbReference type="InterPro" id="IPR047865">
    <property type="entry name" value="Ribosomal_uL10_bac_type"/>
</dbReference>
<dbReference type="NCBIfam" id="NF000955">
    <property type="entry name" value="PRK00099.1-1"/>
    <property type="match status" value="1"/>
</dbReference>
<dbReference type="PANTHER" id="PTHR11560">
    <property type="entry name" value="39S RIBOSOMAL PROTEIN L10, MITOCHONDRIAL"/>
    <property type="match status" value="1"/>
</dbReference>
<dbReference type="Pfam" id="PF00466">
    <property type="entry name" value="Ribosomal_L10"/>
    <property type="match status" value="1"/>
</dbReference>
<dbReference type="SUPFAM" id="SSF160369">
    <property type="entry name" value="Ribosomal protein L10-like"/>
    <property type="match status" value="1"/>
</dbReference>
<sequence length="172" mass="18732">MALRIEDKKAIVAEVAEQVSSALSAAVADYRGLTVNQMTSLRKQARESGVYLRVVRNNLARLAIKGTEFECLADALKGPLVLALSKDEPGAAAKLFKNFQKDHNAFEVKNLAMSGELFGPEKLDDFAKLPTREEALATLLNIMQAPVTKFVRTLNEIPSQAVRVFAAVGDSK</sequence>
<organism>
    <name type="scientific">Francisella tularensis subsp. holarctica (strain LVS)</name>
    <dbReference type="NCBI Taxonomy" id="376619"/>
    <lineage>
        <taxon>Bacteria</taxon>
        <taxon>Pseudomonadati</taxon>
        <taxon>Pseudomonadota</taxon>
        <taxon>Gammaproteobacteria</taxon>
        <taxon>Thiotrichales</taxon>
        <taxon>Francisellaceae</taxon>
        <taxon>Francisella</taxon>
    </lineage>
</organism>
<comment type="function">
    <text evidence="1">Forms part of the ribosomal stalk, playing a central role in the interaction of the ribosome with GTP-bound translation factors.</text>
</comment>
<comment type="subunit">
    <text evidence="1">Part of the ribosomal stalk of the 50S ribosomal subunit. The N-terminus interacts with L11 and the large rRNA to form the base of the stalk. The C-terminus forms an elongated spine to which L12 dimers bind in a sequential fashion forming a multimeric L10(L12)X complex.</text>
</comment>
<comment type="similarity">
    <text evidence="1">Belongs to the universal ribosomal protein uL10 family.</text>
</comment>
<proteinExistence type="inferred from homology"/>
<protein>
    <recommendedName>
        <fullName evidence="1">Large ribosomal subunit protein uL10</fullName>
    </recommendedName>
    <alternativeName>
        <fullName evidence="2">50S ribosomal protein L10</fullName>
    </alternativeName>
</protein>
<feature type="chain" id="PRO_1000005501" description="Large ribosomal subunit protein uL10">
    <location>
        <begin position="1"/>
        <end position="172"/>
    </location>
</feature>